<evidence type="ECO:0000255" key="1">
    <source>
        <dbReference type="HAMAP-Rule" id="MF_00378"/>
    </source>
</evidence>
<feature type="chain" id="PRO_0000197859" description="Exodeoxyribonuclease 7 large subunit">
    <location>
        <begin position="1"/>
        <end position="428"/>
    </location>
</feature>
<sequence length="428" mass="46322">MTEAVPTDSVDSKASSQVNSAENPFPVRAVALRIAGWIDKLGTVWVEGQLAQITMRPNAKTVFMVLRDPAADISLIVTCSRDFVLRAPVKLAEGIQVVVCGKPSFYIGRGTFSLRLSDIRAVGIGELLVRIDRLRRLLDSEGLFDPRLKRPIPFLPNMIGIITGRASAAERDVTTVASARWPAARFAIRNTAVQGPNAVSQIVEALRELDRNVDVEVIVVARGGGSVEDLLTFSDETLCRAIAACRTPVISAVGHEPDNPLCDLVADLRAATPTDAAKKVVPDAAVEQRLIEDLQRRSAQALRNWVSREQRTLVQLRSRPVLAEPLRTLTTRSEEIHRAQSAIRREIIRLVTTETERVGHLATQLATLGPAATLARGYAIVQALEDGTQTVTAAVLRSVDDAPTGTRLRVRVSDGAIVAVSEGRADGP</sequence>
<protein>
    <recommendedName>
        <fullName evidence="1">Exodeoxyribonuclease 7 large subunit</fullName>
        <ecNumber evidence="1">3.1.11.6</ecNumber>
    </recommendedName>
    <alternativeName>
        <fullName evidence="1">Exodeoxyribonuclease VII large subunit</fullName>
        <shortName evidence="1">Exonuclease VII large subunit</shortName>
    </alternativeName>
</protein>
<name>EX7L_MYCLE</name>
<keyword id="KW-0963">Cytoplasm</keyword>
<keyword id="KW-0269">Exonuclease</keyword>
<keyword id="KW-0378">Hydrolase</keyword>
<keyword id="KW-0540">Nuclease</keyword>
<keyword id="KW-1185">Reference proteome</keyword>
<reference key="1">
    <citation type="journal article" date="2001" name="Nature">
        <title>Massive gene decay in the leprosy bacillus.</title>
        <authorList>
            <person name="Cole S.T."/>
            <person name="Eiglmeier K."/>
            <person name="Parkhill J."/>
            <person name="James K.D."/>
            <person name="Thomson N.R."/>
            <person name="Wheeler P.R."/>
            <person name="Honore N."/>
            <person name="Garnier T."/>
            <person name="Churcher C.M."/>
            <person name="Harris D.E."/>
            <person name="Mungall K.L."/>
            <person name="Basham D."/>
            <person name="Brown D."/>
            <person name="Chillingworth T."/>
            <person name="Connor R."/>
            <person name="Davies R.M."/>
            <person name="Devlin K."/>
            <person name="Duthoy S."/>
            <person name="Feltwell T."/>
            <person name="Fraser A."/>
            <person name="Hamlin N."/>
            <person name="Holroyd S."/>
            <person name="Hornsby T."/>
            <person name="Jagels K."/>
            <person name="Lacroix C."/>
            <person name="Maclean J."/>
            <person name="Moule S."/>
            <person name="Murphy L.D."/>
            <person name="Oliver K."/>
            <person name="Quail M.A."/>
            <person name="Rajandream M.A."/>
            <person name="Rutherford K.M."/>
            <person name="Rutter S."/>
            <person name="Seeger K."/>
            <person name="Simon S."/>
            <person name="Simmonds M."/>
            <person name="Skelton J."/>
            <person name="Squares R."/>
            <person name="Squares S."/>
            <person name="Stevens K."/>
            <person name="Taylor K."/>
            <person name="Whitehead S."/>
            <person name="Woodward J.R."/>
            <person name="Barrell B.G."/>
        </authorList>
    </citation>
    <scope>NUCLEOTIDE SEQUENCE [LARGE SCALE GENOMIC DNA]</scope>
    <source>
        <strain>TN</strain>
    </source>
</reference>
<organism>
    <name type="scientific">Mycobacterium leprae (strain TN)</name>
    <dbReference type="NCBI Taxonomy" id="272631"/>
    <lineage>
        <taxon>Bacteria</taxon>
        <taxon>Bacillati</taxon>
        <taxon>Actinomycetota</taxon>
        <taxon>Actinomycetes</taxon>
        <taxon>Mycobacteriales</taxon>
        <taxon>Mycobacteriaceae</taxon>
        <taxon>Mycobacterium</taxon>
    </lineage>
</organism>
<gene>
    <name evidence="1" type="primary">xseA</name>
    <name type="ordered locus">ML1940</name>
    <name type="ORF">MLCB1222.08</name>
</gene>
<accession>Q9X783</accession>
<dbReference type="EC" id="3.1.11.6" evidence="1"/>
<dbReference type="EMBL" id="AL049491">
    <property type="protein sequence ID" value="CAB39814.1"/>
    <property type="molecule type" value="Genomic_DNA"/>
</dbReference>
<dbReference type="EMBL" id="AL583923">
    <property type="protein sequence ID" value="CAC30895.1"/>
    <property type="molecule type" value="Genomic_DNA"/>
</dbReference>
<dbReference type="PIR" id="G87151">
    <property type="entry name" value="G87151"/>
</dbReference>
<dbReference type="RefSeq" id="NP_302308.1">
    <property type="nucleotide sequence ID" value="NC_002677.1"/>
</dbReference>
<dbReference type="RefSeq" id="WP_010908629.1">
    <property type="nucleotide sequence ID" value="NC_002677.1"/>
</dbReference>
<dbReference type="SMR" id="Q9X783"/>
<dbReference type="STRING" id="272631.gene:17575792"/>
<dbReference type="KEGG" id="mle:ML1940"/>
<dbReference type="PATRIC" id="fig|272631.5.peg.3681"/>
<dbReference type="Leproma" id="ML1940"/>
<dbReference type="eggNOG" id="COG1570">
    <property type="taxonomic scope" value="Bacteria"/>
</dbReference>
<dbReference type="HOGENOM" id="CLU_023625_2_1_11"/>
<dbReference type="OrthoDB" id="9802795at2"/>
<dbReference type="Proteomes" id="UP000000806">
    <property type="component" value="Chromosome"/>
</dbReference>
<dbReference type="GO" id="GO:0005737">
    <property type="term" value="C:cytoplasm"/>
    <property type="evidence" value="ECO:0007669"/>
    <property type="project" value="UniProtKB-SubCell"/>
</dbReference>
<dbReference type="GO" id="GO:0009318">
    <property type="term" value="C:exodeoxyribonuclease VII complex"/>
    <property type="evidence" value="ECO:0007669"/>
    <property type="project" value="InterPro"/>
</dbReference>
<dbReference type="GO" id="GO:0008855">
    <property type="term" value="F:exodeoxyribonuclease VII activity"/>
    <property type="evidence" value="ECO:0007669"/>
    <property type="project" value="UniProtKB-UniRule"/>
</dbReference>
<dbReference type="GO" id="GO:0003676">
    <property type="term" value="F:nucleic acid binding"/>
    <property type="evidence" value="ECO:0007669"/>
    <property type="project" value="InterPro"/>
</dbReference>
<dbReference type="GO" id="GO:0006308">
    <property type="term" value="P:DNA catabolic process"/>
    <property type="evidence" value="ECO:0007669"/>
    <property type="project" value="UniProtKB-UniRule"/>
</dbReference>
<dbReference type="CDD" id="cd04489">
    <property type="entry name" value="ExoVII_LU_OBF"/>
    <property type="match status" value="1"/>
</dbReference>
<dbReference type="HAMAP" id="MF_00378">
    <property type="entry name" value="Exonuc_7_L"/>
    <property type="match status" value="1"/>
</dbReference>
<dbReference type="InterPro" id="IPR003753">
    <property type="entry name" value="Exonuc_VII_L"/>
</dbReference>
<dbReference type="InterPro" id="IPR020579">
    <property type="entry name" value="Exonuc_VII_lsu_C"/>
</dbReference>
<dbReference type="InterPro" id="IPR025824">
    <property type="entry name" value="OB-fold_nuc-bd_dom"/>
</dbReference>
<dbReference type="NCBIfam" id="TIGR00237">
    <property type="entry name" value="xseA"/>
    <property type="match status" value="1"/>
</dbReference>
<dbReference type="PANTHER" id="PTHR30008">
    <property type="entry name" value="EXODEOXYRIBONUCLEASE 7 LARGE SUBUNIT"/>
    <property type="match status" value="1"/>
</dbReference>
<dbReference type="PANTHER" id="PTHR30008:SF0">
    <property type="entry name" value="EXODEOXYRIBONUCLEASE 7 LARGE SUBUNIT"/>
    <property type="match status" value="1"/>
</dbReference>
<dbReference type="Pfam" id="PF02601">
    <property type="entry name" value="Exonuc_VII_L"/>
    <property type="match status" value="2"/>
</dbReference>
<dbReference type="Pfam" id="PF13742">
    <property type="entry name" value="tRNA_anti_2"/>
    <property type="match status" value="1"/>
</dbReference>
<comment type="function">
    <text evidence="1">Bidirectionally degrades single-stranded DNA into large acid-insoluble oligonucleotides, which are then degraded further into small acid-soluble oligonucleotides.</text>
</comment>
<comment type="catalytic activity">
    <reaction evidence="1">
        <text>Exonucleolytic cleavage in either 5'- to 3'- or 3'- to 5'-direction to yield nucleoside 5'-phosphates.</text>
        <dbReference type="EC" id="3.1.11.6"/>
    </reaction>
</comment>
<comment type="subunit">
    <text evidence="1">Heterooligomer composed of large and small subunits.</text>
</comment>
<comment type="subcellular location">
    <subcellularLocation>
        <location evidence="1">Cytoplasm</location>
    </subcellularLocation>
</comment>
<comment type="similarity">
    <text evidence="1">Belongs to the XseA family.</text>
</comment>
<proteinExistence type="inferred from homology"/>